<organism>
    <name type="scientific">Aspergillus fumigatus (strain ATCC MYA-4609 / CBS 101355 / FGSC A1100 / Af293)</name>
    <name type="common">Neosartorya fumigata</name>
    <dbReference type="NCBI Taxonomy" id="330879"/>
    <lineage>
        <taxon>Eukaryota</taxon>
        <taxon>Fungi</taxon>
        <taxon>Dikarya</taxon>
        <taxon>Ascomycota</taxon>
        <taxon>Pezizomycotina</taxon>
        <taxon>Eurotiomycetes</taxon>
        <taxon>Eurotiomycetidae</taxon>
        <taxon>Eurotiales</taxon>
        <taxon>Aspergillaceae</taxon>
        <taxon>Aspergillus</taxon>
        <taxon>Aspergillus subgen. Fumigati</taxon>
    </lineage>
</organism>
<reference key="1">
    <citation type="journal article" date="2005" name="Nature">
        <title>Genomic sequence of the pathogenic and allergenic filamentous fungus Aspergillus fumigatus.</title>
        <authorList>
            <person name="Nierman W.C."/>
            <person name="Pain A."/>
            <person name="Anderson M.J."/>
            <person name="Wortman J.R."/>
            <person name="Kim H.S."/>
            <person name="Arroyo J."/>
            <person name="Berriman M."/>
            <person name="Abe K."/>
            <person name="Archer D.B."/>
            <person name="Bermejo C."/>
            <person name="Bennett J.W."/>
            <person name="Bowyer P."/>
            <person name="Chen D."/>
            <person name="Collins M."/>
            <person name="Coulsen R."/>
            <person name="Davies R."/>
            <person name="Dyer P.S."/>
            <person name="Farman M.L."/>
            <person name="Fedorova N."/>
            <person name="Fedorova N.D."/>
            <person name="Feldblyum T.V."/>
            <person name="Fischer R."/>
            <person name="Fosker N."/>
            <person name="Fraser A."/>
            <person name="Garcia J.L."/>
            <person name="Garcia M.J."/>
            <person name="Goble A."/>
            <person name="Goldman G.H."/>
            <person name="Gomi K."/>
            <person name="Griffith-Jones S."/>
            <person name="Gwilliam R."/>
            <person name="Haas B.J."/>
            <person name="Haas H."/>
            <person name="Harris D.E."/>
            <person name="Horiuchi H."/>
            <person name="Huang J."/>
            <person name="Humphray S."/>
            <person name="Jimenez J."/>
            <person name="Keller N."/>
            <person name="Khouri H."/>
            <person name="Kitamoto K."/>
            <person name="Kobayashi T."/>
            <person name="Konzack S."/>
            <person name="Kulkarni R."/>
            <person name="Kumagai T."/>
            <person name="Lafton A."/>
            <person name="Latge J.-P."/>
            <person name="Li W."/>
            <person name="Lord A."/>
            <person name="Lu C."/>
            <person name="Majoros W.H."/>
            <person name="May G.S."/>
            <person name="Miller B.L."/>
            <person name="Mohamoud Y."/>
            <person name="Molina M."/>
            <person name="Monod M."/>
            <person name="Mouyna I."/>
            <person name="Mulligan S."/>
            <person name="Murphy L.D."/>
            <person name="O'Neil S."/>
            <person name="Paulsen I."/>
            <person name="Penalva M.A."/>
            <person name="Pertea M."/>
            <person name="Price C."/>
            <person name="Pritchard B.L."/>
            <person name="Quail M.A."/>
            <person name="Rabbinowitsch E."/>
            <person name="Rawlins N."/>
            <person name="Rajandream M.A."/>
            <person name="Reichard U."/>
            <person name="Renauld H."/>
            <person name="Robson G.D."/>
            <person name="Rodriguez de Cordoba S."/>
            <person name="Rodriguez-Pena J.M."/>
            <person name="Ronning C.M."/>
            <person name="Rutter S."/>
            <person name="Salzberg S.L."/>
            <person name="Sanchez M."/>
            <person name="Sanchez-Ferrero J.C."/>
            <person name="Saunders D."/>
            <person name="Seeger K."/>
            <person name="Squares R."/>
            <person name="Squares S."/>
            <person name="Takeuchi M."/>
            <person name="Tekaia F."/>
            <person name="Turner G."/>
            <person name="Vazquez de Aldana C.R."/>
            <person name="Weidman J."/>
            <person name="White O."/>
            <person name="Woodward J.R."/>
            <person name="Yu J.-H."/>
            <person name="Fraser C.M."/>
            <person name="Galagan J.E."/>
            <person name="Asai K."/>
            <person name="Machida M."/>
            <person name="Hall N."/>
            <person name="Barrell B.G."/>
            <person name="Denning D.W."/>
        </authorList>
    </citation>
    <scope>NUCLEOTIDE SEQUENCE [LARGE SCALE GENOMIC DNA]</scope>
    <source>
        <strain>ATCC MYA-4609 / CBS 101355 / FGSC A1100 / Af293</strain>
    </source>
</reference>
<evidence type="ECO:0000250" key="1"/>
<evidence type="ECO:0000250" key="2">
    <source>
        <dbReference type="UniProtKB" id="P46995"/>
    </source>
</evidence>
<evidence type="ECO:0000255" key="3">
    <source>
        <dbReference type="PROSITE-ProRule" id="PRU00155"/>
    </source>
</evidence>
<evidence type="ECO:0000255" key="4">
    <source>
        <dbReference type="PROSITE-ProRule" id="PRU00190"/>
    </source>
</evidence>
<evidence type="ECO:0000255" key="5">
    <source>
        <dbReference type="PROSITE-ProRule" id="PRU00562"/>
    </source>
</evidence>
<evidence type="ECO:0000255" key="6">
    <source>
        <dbReference type="PROSITE-ProRule" id="PRU00901"/>
    </source>
</evidence>
<evidence type="ECO:0000256" key="7">
    <source>
        <dbReference type="SAM" id="MobiDB-lite"/>
    </source>
</evidence>
<proteinExistence type="inferred from homology"/>
<name>SET2_ASPFU</name>
<keyword id="KW-0158">Chromosome</keyword>
<keyword id="KW-0489">Methyltransferase</keyword>
<keyword id="KW-0539">Nucleus</keyword>
<keyword id="KW-1185">Reference proteome</keyword>
<keyword id="KW-0678">Repressor</keyword>
<keyword id="KW-0949">S-adenosyl-L-methionine</keyword>
<keyword id="KW-0804">Transcription</keyword>
<keyword id="KW-0805">Transcription regulation</keyword>
<keyword id="KW-0808">Transferase</keyword>
<dbReference type="EC" id="2.1.1.359" evidence="2"/>
<dbReference type="EMBL" id="AAHF01000003">
    <property type="protein sequence ID" value="EAL91994.1"/>
    <property type="molecule type" value="Genomic_DNA"/>
</dbReference>
<dbReference type="RefSeq" id="XP_754032.1">
    <property type="nucleotide sequence ID" value="XM_748939.1"/>
</dbReference>
<dbReference type="SMR" id="Q4WTT2"/>
<dbReference type="FunCoup" id="Q4WTT2">
    <property type="interactions" value="102"/>
</dbReference>
<dbReference type="STRING" id="330879.Q4WTT2"/>
<dbReference type="EnsemblFungi" id="EAL91994">
    <property type="protein sequence ID" value="EAL91994"/>
    <property type="gene ID" value="AFUA_5G06000"/>
</dbReference>
<dbReference type="GeneID" id="3511090"/>
<dbReference type="KEGG" id="afm:AFUA_5G06000"/>
<dbReference type="VEuPathDB" id="FungiDB:Afu5g06000"/>
<dbReference type="eggNOG" id="KOG4442">
    <property type="taxonomic scope" value="Eukaryota"/>
</dbReference>
<dbReference type="HOGENOM" id="CLU_008492_0_1_1"/>
<dbReference type="InParanoid" id="Q4WTT2"/>
<dbReference type="OMA" id="AQSQPCY"/>
<dbReference type="OrthoDB" id="422362at2759"/>
<dbReference type="Proteomes" id="UP000002530">
    <property type="component" value="Chromosome 5"/>
</dbReference>
<dbReference type="GO" id="GO:0000785">
    <property type="term" value="C:chromatin"/>
    <property type="evidence" value="ECO:0000318"/>
    <property type="project" value="GO_Central"/>
</dbReference>
<dbReference type="GO" id="GO:0005634">
    <property type="term" value="C:nucleus"/>
    <property type="evidence" value="ECO:0000318"/>
    <property type="project" value="GO_Central"/>
</dbReference>
<dbReference type="GO" id="GO:0046975">
    <property type="term" value="F:histone H3K36 methyltransferase activity"/>
    <property type="evidence" value="ECO:0000318"/>
    <property type="project" value="GO_Central"/>
</dbReference>
<dbReference type="GO" id="GO:0140955">
    <property type="term" value="F:histone H3K36 trimethyltransferase activity"/>
    <property type="evidence" value="ECO:0007669"/>
    <property type="project" value="UniProtKB-EC"/>
</dbReference>
<dbReference type="GO" id="GO:0032259">
    <property type="term" value="P:methylation"/>
    <property type="evidence" value="ECO:0007669"/>
    <property type="project" value="UniProtKB-KW"/>
</dbReference>
<dbReference type="GO" id="GO:0006355">
    <property type="term" value="P:regulation of DNA-templated transcription"/>
    <property type="evidence" value="ECO:0000318"/>
    <property type="project" value="GO_Central"/>
</dbReference>
<dbReference type="CDD" id="cd19172">
    <property type="entry name" value="SET_SETD2"/>
    <property type="match status" value="1"/>
</dbReference>
<dbReference type="FunFam" id="1.10.1740.100:FF:000002">
    <property type="entry name" value="Histone-lysine N-methyltransferase"/>
    <property type="match status" value="1"/>
</dbReference>
<dbReference type="FunFam" id="2.170.270.10:FF:000033">
    <property type="entry name" value="Histone-lysine N-methyltransferase"/>
    <property type="match status" value="1"/>
</dbReference>
<dbReference type="Gene3D" id="2.170.270.10">
    <property type="entry name" value="SET domain"/>
    <property type="match status" value="1"/>
</dbReference>
<dbReference type="Gene3D" id="1.10.1740.100">
    <property type="entry name" value="Set2, Rpb1 interacting domain"/>
    <property type="match status" value="1"/>
</dbReference>
<dbReference type="InterPro" id="IPR006560">
    <property type="entry name" value="AWS_dom"/>
</dbReference>
<dbReference type="InterPro" id="IPR003616">
    <property type="entry name" value="Post-SET_dom"/>
</dbReference>
<dbReference type="InterPro" id="IPR025788">
    <property type="entry name" value="Set2_fungi"/>
</dbReference>
<dbReference type="InterPro" id="IPR050777">
    <property type="entry name" value="SET2_Histone-Lys_MeTrsfase"/>
</dbReference>
<dbReference type="InterPro" id="IPR001214">
    <property type="entry name" value="SET_dom"/>
</dbReference>
<dbReference type="InterPro" id="IPR046341">
    <property type="entry name" value="SET_dom_sf"/>
</dbReference>
<dbReference type="InterPro" id="IPR044437">
    <property type="entry name" value="SETD2/Set2_SET"/>
</dbReference>
<dbReference type="InterPro" id="IPR013257">
    <property type="entry name" value="SRI"/>
</dbReference>
<dbReference type="InterPro" id="IPR038190">
    <property type="entry name" value="SRI_sf"/>
</dbReference>
<dbReference type="InterPro" id="IPR035441">
    <property type="entry name" value="TFIIS/LEDGF_dom_sf"/>
</dbReference>
<dbReference type="InterPro" id="IPR017923">
    <property type="entry name" value="TFIIS_N"/>
</dbReference>
<dbReference type="InterPro" id="IPR036020">
    <property type="entry name" value="WW_dom_sf"/>
</dbReference>
<dbReference type="PANTHER" id="PTHR22884">
    <property type="entry name" value="SET DOMAIN PROTEINS"/>
    <property type="match status" value="1"/>
</dbReference>
<dbReference type="Pfam" id="PF17907">
    <property type="entry name" value="AWS"/>
    <property type="match status" value="1"/>
</dbReference>
<dbReference type="Pfam" id="PF08711">
    <property type="entry name" value="Med26"/>
    <property type="match status" value="1"/>
</dbReference>
<dbReference type="Pfam" id="PF00856">
    <property type="entry name" value="SET"/>
    <property type="match status" value="1"/>
</dbReference>
<dbReference type="Pfam" id="PF08236">
    <property type="entry name" value="SRI"/>
    <property type="match status" value="1"/>
</dbReference>
<dbReference type="SMART" id="SM00570">
    <property type="entry name" value="AWS"/>
    <property type="match status" value="1"/>
</dbReference>
<dbReference type="SMART" id="SM00508">
    <property type="entry name" value="PostSET"/>
    <property type="match status" value="1"/>
</dbReference>
<dbReference type="SMART" id="SM00317">
    <property type="entry name" value="SET"/>
    <property type="match status" value="1"/>
</dbReference>
<dbReference type="SUPFAM" id="SSF47676">
    <property type="entry name" value="Conserved domain common to transcription factors TFIIS, elongin A, CRSP70"/>
    <property type="match status" value="1"/>
</dbReference>
<dbReference type="SUPFAM" id="SSF82199">
    <property type="entry name" value="SET domain"/>
    <property type="match status" value="1"/>
</dbReference>
<dbReference type="SUPFAM" id="SSF51045">
    <property type="entry name" value="WW domain"/>
    <property type="match status" value="1"/>
</dbReference>
<dbReference type="PROSITE" id="PS51215">
    <property type="entry name" value="AWS"/>
    <property type="match status" value="1"/>
</dbReference>
<dbReference type="PROSITE" id="PS50868">
    <property type="entry name" value="POST_SET"/>
    <property type="match status" value="1"/>
</dbReference>
<dbReference type="PROSITE" id="PS51568">
    <property type="entry name" value="SAM_MT43_SET2_1"/>
    <property type="match status" value="1"/>
</dbReference>
<dbReference type="PROSITE" id="PS50280">
    <property type="entry name" value="SET"/>
    <property type="match status" value="1"/>
</dbReference>
<protein>
    <recommendedName>
        <fullName>Histone-lysine N-methyltransferase, H3 lysine-36 specific</fullName>
        <ecNumber evidence="2">2.1.1.359</ecNumber>
    </recommendedName>
    <alternativeName>
        <fullName>SET domain-containing protein 2</fullName>
    </alternativeName>
</protein>
<feature type="chain" id="PRO_0000269780" description="Histone-lysine N-methyltransferase, H3 lysine-36 specific">
    <location>
        <begin position="1"/>
        <end position="966"/>
    </location>
</feature>
<feature type="domain" description="AWS" evidence="5">
    <location>
        <begin position="157"/>
        <end position="212"/>
    </location>
</feature>
<feature type="domain" description="SET" evidence="4">
    <location>
        <begin position="214"/>
        <end position="331"/>
    </location>
</feature>
<feature type="domain" description="Post-SET" evidence="3">
    <location>
        <begin position="338"/>
        <end position="354"/>
    </location>
</feature>
<feature type="domain" description="WW">
    <location>
        <begin position="603"/>
        <end position="634"/>
    </location>
</feature>
<feature type="region of interest" description="Disordered" evidence="7">
    <location>
        <begin position="1"/>
        <end position="20"/>
    </location>
</feature>
<feature type="region of interest" description="Disordered" evidence="7">
    <location>
        <begin position="67"/>
        <end position="92"/>
    </location>
</feature>
<feature type="region of interest" description="Disordered" evidence="7">
    <location>
        <begin position="540"/>
        <end position="595"/>
    </location>
</feature>
<feature type="region of interest" description="Disordered" evidence="7">
    <location>
        <begin position="666"/>
        <end position="691"/>
    </location>
</feature>
<feature type="region of interest" description="Disordered" evidence="7">
    <location>
        <begin position="782"/>
        <end position="966"/>
    </location>
</feature>
<feature type="compositionally biased region" description="Low complexity" evidence="7">
    <location>
        <begin position="1"/>
        <end position="13"/>
    </location>
</feature>
<feature type="compositionally biased region" description="Polar residues" evidence="7">
    <location>
        <begin position="67"/>
        <end position="87"/>
    </location>
</feature>
<feature type="compositionally biased region" description="Basic and acidic residues" evidence="7">
    <location>
        <begin position="548"/>
        <end position="559"/>
    </location>
</feature>
<feature type="compositionally biased region" description="Polar residues" evidence="7">
    <location>
        <begin position="672"/>
        <end position="687"/>
    </location>
</feature>
<feature type="compositionally biased region" description="Basic and acidic residues" evidence="7">
    <location>
        <begin position="782"/>
        <end position="823"/>
    </location>
</feature>
<feature type="compositionally biased region" description="Pro residues" evidence="7">
    <location>
        <begin position="863"/>
        <end position="874"/>
    </location>
</feature>
<feature type="compositionally biased region" description="Pro residues" evidence="7">
    <location>
        <begin position="905"/>
        <end position="914"/>
    </location>
</feature>
<feature type="compositionally biased region" description="Polar residues" evidence="7">
    <location>
        <begin position="924"/>
        <end position="934"/>
    </location>
</feature>
<accession>Q4WTT2</accession>
<comment type="function">
    <text evidence="2">Histone methyltransferase that trimethylates histone H3 'Lys-36' forming H3K36me3. Involved in transcription elongation as well as in transcription repression.</text>
</comment>
<comment type="catalytic activity">
    <reaction evidence="2 6">
        <text>L-lysyl(36)-[histone H3] + 3 S-adenosyl-L-methionine = N(6),N(6),N(6)-trimethyl-L-lysyl(36)-[histone H3] + 3 S-adenosyl-L-homocysteine + 3 H(+)</text>
        <dbReference type="Rhea" id="RHEA:60324"/>
        <dbReference type="Rhea" id="RHEA-COMP:9785"/>
        <dbReference type="Rhea" id="RHEA-COMP:15536"/>
        <dbReference type="ChEBI" id="CHEBI:15378"/>
        <dbReference type="ChEBI" id="CHEBI:29969"/>
        <dbReference type="ChEBI" id="CHEBI:57856"/>
        <dbReference type="ChEBI" id="CHEBI:59789"/>
        <dbReference type="ChEBI" id="CHEBI:61961"/>
        <dbReference type="EC" id="2.1.1.359"/>
    </reaction>
</comment>
<comment type="subcellular location">
    <subcellularLocation>
        <location evidence="1">Nucleus</location>
    </subcellularLocation>
    <subcellularLocation>
        <location evidence="1">Chromosome</location>
    </subcellularLocation>
</comment>
<comment type="domain">
    <text evidence="1">The AWS and SET domains are necessary for transcription repression.</text>
</comment>
<comment type="similarity">
    <text evidence="6">Belongs to the class V-like SAM-binding methyltransferase superfamily. Histone-lysine methyltransferase family. SET2 subfamily.</text>
</comment>
<sequence length="966" mass="107882">MSSHDNADSPSSSVANAVTAMKIEQHDGAADMLLSNGGDAVLKRDSNGLSEHAVTAKDYPGMNDLASSTVKSRTSSLTPIKTENGDSTAKEEKVGGDITVKMEPGQPPKLSRSSSQKVVAQPPQLFLHLPDSTAEAQSTFEVMETCTYANKYMGYTEHAMECDCAEEWEPSLSRNLACGEDSDCINRATKIECVGDCSCGAECQNQRFQRKEYANVAVIKTEKKGFGLRAETDLRPHQFIFEYVGEVINEAQFRRRMRQYDEEGIKHFYFMSLSRGEFVDATKKGNLGRFCNHSCNPNCYVDKWVVGEKLRMGIFAERAIQAGEELVFNYNVDRYGADPQPCYCGEPNCTGFIGGKTQTDRATKLSNATIEALGIEDADSWDTVVAKRPRKKKMGEDDEEYVDSVQPKSLDENGVTKVMAALMQCKEKWIAVKLLRRIERCDDDRVRHRVVKMHGYQILNSQLTLWKDDFNVVLQILNILDGFPRLTRNKIIDSKIESTVQPLTTCGDERVEKKAAALLQHWATLEVGYRIPRMKRDPNAVASVSQFGRREHTTDEQKRSQSRSRSRSPSLDAPRGPANPGRKSNGPRNSQHHGARQFRRQFNPLPPGWFAAESHGRTYYYCARGDVTWTRPIHAAPEAEVPGQQAKNKALQGIIDNILNAKENTPKEKTVTPGTPQASRETASLNEGQERWRSYSEEKQKKLYENTLFPHIKYVVDKFKHKLPKEDLKRYAKDVAKKLVNSDFKNNRVEDPTKISEKQQKKVKAFCKEFFDKAVAKHRAYEQRKAEKQAKGGNSKADDMISGHNTVEDDVKLSDGEAEKVEENDNSMSSDPQGILKRKREDEMDIGEGAAEEAMKRQKSSTPIPPPPPPPPPLGDEEQPTPNGTGEDDFLAENGVSMLHSPGSAPTPPPPPPLSTEHSDNDEMGQSPSMSNHLLEQKSFPAPLGEEYEADSGKLSSNRIGIEGQV</sequence>
<gene>
    <name type="primary">set2</name>
    <name type="ORF">AFUA_5G06000</name>
</gene>